<dbReference type="EC" id="3.6.1.15" evidence="1"/>
<dbReference type="EC" id="3.6.1.6" evidence="1"/>
<dbReference type="EMBL" id="BA000028">
    <property type="protein sequence ID" value="BAC12855.1"/>
    <property type="molecule type" value="Genomic_DNA"/>
</dbReference>
<dbReference type="RefSeq" id="WP_011065305.1">
    <property type="nucleotide sequence ID" value="NC_004193.1"/>
</dbReference>
<dbReference type="SMR" id="Q8CV58"/>
<dbReference type="STRING" id="221109.gene:10733120"/>
<dbReference type="KEGG" id="oih:OB0899"/>
<dbReference type="eggNOG" id="COG3557">
    <property type="taxonomic scope" value="Bacteria"/>
</dbReference>
<dbReference type="HOGENOM" id="CLU_109787_1_0_9"/>
<dbReference type="OrthoDB" id="1645325at2"/>
<dbReference type="PhylomeDB" id="Q8CV58"/>
<dbReference type="Proteomes" id="UP000000822">
    <property type="component" value="Chromosome"/>
</dbReference>
<dbReference type="GO" id="GO:0000287">
    <property type="term" value="F:magnesium ion binding"/>
    <property type="evidence" value="ECO:0007669"/>
    <property type="project" value="UniProtKB-UniRule"/>
</dbReference>
<dbReference type="GO" id="GO:0017110">
    <property type="term" value="F:nucleoside diphosphate phosphatase activity"/>
    <property type="evidence" value="ECO:0007669"/>
    <property type="project" value="UniProtKB-UniRule"/>
</dbReference>
<dbReference type="GO" id="GO:0017111">
    <property type="term" value="F:ribonucleoside triphosphate phosphatase activity"/>
    <property type="evidence" value="ECO:0007669"/>
    <property type="project" value="UniProtKB-UniRule"/>
</dbReference>
<dbReference type="Gene3D" id="2.40.380.10">
    <property type="entry name" value="FomD-like"/>
    <property type="match status" value="1"/>
</dbReference>
<dbReference type="HAMAP" id="MF_01568">
    <property type="entry name" value="Ntdp"/>
    <property type="match status" value="1"/>
</dbReference>
<dbReference type="InterPro" id="IPR007295">
    <property type="entry name" value="DUF402"/>
</dbReference>
<dbReference type="InterPro" id="IPR035930">
    <property type="entry name" value="FomD-like_sf"/>
</dbReference>
<dbReference type="InterPro" id="IPR050212">
    <property type="entry name" value="Ntdp-like"/>
</dbReference>
<dbReference type="InterPro" id="IPR016882">
    <property type="entry name" value="SA1684"/>
</dbReference>
<dbReference type="NCBIfam" id="NF010183">
    <property type="entry name" value="PRK13662.1"/>
    <property type="match status" value="1"/>
</dbReference>
<dbReference type="PANTHER" id="PTHR39159">
    <property type="match status" value="1"/>
</dbReference>
<dbReference type="PANTHER" id="PTHR39159:SF1">
    <property type="entry name" value="UPF0374 PROTEIN YGAC"/>
    <property type="match status" value="1"/>
</dbReference>
<dbReference type="Pfam" id="PF04167">
    <property type="entry name" value="DUF402"/>
    <property type="match status" value="1"/>
</dbReference>
<dbReference type="PIRSF" id="PIRSF028345">
    <property type="entry name" value="UCP028345"/>
    <property type="match status" value="1"/>
</dbReference>
<dbReference type="SUPFAM" id="SSF159234">
    <property type="entry name" value="FomD-like"/>
    <property type="match status" value="1"/>
</dbReference>
<name>NTDP_OCEIH</name>
<protein>
    <recommendedName>
        <fullName evidence="1">Nucleoside triphosphate/diphosphate phosphatase</fullName>
        <ecNumber evidence="1">3.6.1.15</ecNumber>
        <ecNumber evidence="1">3.6.1.6</ecNumber>
    </recommendedName>
</protein>
<organism>
    <name type="scientific">Oceanobacillus iheyensis (strain DSM 14371 / CIP 107618 / JCM 11309 / KCTC 3954 / HTE831)</name>
    <dbReference type="NCBI Taxonomy" id="221109"/>
    <lineage>
        <taxon>Bacteria</taxon>
        <taxon>Bacillati</taxon>
        <taxon>Bacillota</taxon>
        <taxon>Bacilli</taxon>
        <taxon>Bacillales</taxon>
        <taxon>Bacillaceae</taxon>
        <taxon>Oceanobacillus</taxon>
    </lineage>
</organism>
<feature type="chain" id="PRO_0000248103" description="Nucleoside triphosphate/diphosphate phosphatase">
    <location>
        <begin position="1"/>
        <end position="175"/>
    </location>
</feature>
<feature type="active site" description="Proton donor" evidence="1">
    <location>
        <position position="23"/>
    </location>
</feature>
<feature type="binding site" evidence="1">
    <location>
        <position position="87"/>
    </location>
    <ligand>
        <name>Mg(2+)</name>
        <dbReference type="ChEBI" id="CHEBI:18420"/>
        <label>1</label>
    </ligand>
</feature>
<feature type="binding site" evidence="1">
    <location>
        <position position="103"/>
    </location>
    <ligand>
        <name>Mg(2+)</name>
        <dbReference type="ChEBI" id="CHEBI:18420"/>
        <label>1</label>
    </ligand>
</feature>
<feature type="binding site" evidence="1">
    <location>
        <position position="105"/>
    </location>
    <ligand>
        <name>Mg(2+)</name>
        <dbReference type="ChEBI" id="CHEBI:18420"/>
        <label>2</label>
    </ligand>
</feature>
<feature type="binding site" evidence="1">
    <location>
        <position position="107"/>
    </location>
    <ligand>
        <name>Mg(2+)</name>
        <dbReference type="ChEBI" id="CHEBI:18420"/>
        <label>1</label>
    </ligand>
</feature>
<feature type="binding site" evidence="1">
    <location>
        <position position="107"/>
    </location>
    <ligand>
        <name>Mg(2+)</name>
        <dbReference type="ChEBI" id="CHEBI:18420"/>
        <label>2</label>
    </ligand>
</feature>
<feature type="binding site" evidence="1">
    <location>
        <position position="120"/>
    </location>
    <ligand>
        <name>Mg(2+)</name>
        <dbReference type="ChEBI" id="CHEBI:18420"/>
        <label>2</label>
    </ligand>
</feature>
<feature type="binding site" evidence="1">
    <location>
        <position position="123"/>
    </location>
    <ligand>
        <name>Mg(2+)</name>
        <dbReference type="ChEBI" id="CHEBI:18420"/>
        <label>2</label>
    </ligand>
</feature>
<comment type="function">
    <text evidence="1">Has nucleoside phosphatase activity towards nucleoside triphosphates and nucleoside diphosphates.</text>
</comment>
<comment type="catalytic activity">
    <reaction evidence="1">
        <text>a ribonucleoside 5'-triphosphate + H2O = a ribonucleoside 5'-diphosphate + phosphate + H(+)</text>
        <dbReference type="Rhea" id="RHEA:23680"/>
        <dbReference type="ChEBI" id="CHEBI:15377"/>
        <dbReference type="ChEBI" id="CHEBI:15378"/>
        <dbReference type="ChEBI" id="CHEBI:43474"/>
        <dbReference type="ChEBI" id="CHEBI:57930"/>
        <dbReference type="ChEBI" id="CHEBI:61557"/>
        <dbReference type="EC" id="3.6.1.15"/>
    </reaction>
</comment>
<comment type="catalytic activity">
    <reaction evidence="1">
        <text>a ribonucleoside 5'-diphosphate + H2O = a ribonucleoside 5'-phosphate + phosphate + H(+)</text>
        <dbReference type="Rhea" id="RHEA:36799"/>
        <dbReference type="ChEBI" id="CHEBI:15377"/>
        <dbReference type="ChEBI" id="CHEBI:15378"/>
        <dbReference type="ChEBI" id="CHEBI:43474"/>
        <dbReference type="ChEBI" id="CHEBI:57930"/>
        <dbReference type="ChEBI" id="CHEBI:58043"/>
        <dbReference type="EC" id="3.6.1.6"/>
    </reaction>
</comment>
<comment type="cofactor">
    <cofactor evidence="1">
        <name>Mg(2+)</name>
        <dbReference type="ChEBI" id="CHEBI:18420"/>
    </cofactor>
</comment>
<comment type="similarity">
    <text evidence="1">Belongs to the Ntdp family.</text>
</comment>
<reference key="1">
    <citation type="journal article" date="2002" name="Nucleic Acids Res.">
        <title>Genome sequence of Oceanobacillus iheyensis isolated from the Iheya Ridge and its unexpected adaptive capabilities to extreme environments.</title>
        <authorList>
            <person name="Takami H."/>
            <person name="Takaki Y."/>
            <person name="Uchiyama I."/>
        </authorList>
    </citation>
    <scope>NUCLEOTIDE SEQUENCE [LARGE SCALE GENOMIC DNA]</scope>
    <source>
        <strain>DSM 14371 / CIP 107618 / JCM 11309 / KCTC 3954 / HTE831</strain>
    </source>
</reference>
<proteinExistence type="inferred from homology"/>
<gene>
    <name type="ordered locus">OB0899</name>
</gene>
<accession>Q8CV58</accession>
<evidence type="ECO:0000255" key="1">
    <source>
        <dbReference type="HAMAP-Rule" id="MF_01568"/>
    </source>
</evidence>
<sequence>MVSPNAGSKVSIQSYKHNGQLHRTWENSVILKGTESVVIGANDRTKVIESDGRSWITREPAICYFHSKYWFNIIGMLRNDGIYYYCNISSPFVYDGEALKYIDYDLDVKVFPDMTFQLLDEDEYEEHRNLMNYPQVIDRILHQQLEILIRWIRQGKGPFSPDFVDNWYEMYLTYH</sequence>
<keyword id="KW-0378">Hydrolase</keyword>
<keyword id="KW-0460">Magnesium</keyword>
<keyword id="KW-0479">Metal-binding</keyword>
<keyword id="KW-1185">Reference proteome</keyword>